<accession>C6E559</accession>
<keyword id="KW-0963">Cytoplasm</keyword>
<keyword id="KW-0378">Hydrolase</keyword>
<keyword id="KW-0546">Nucleotide metabolism</keyword>
<reference key="1">
    <citation type="submission" date="2009-07" db="EMBL/GenBank/DDBJ databases">
        <title>Complete sequence of Geobacter sp. M21.</title>
        <authorList>
            <consortium name="US DOE Joint Genome Institute"/>
            <person name="Lucas S."/>
            <person name="Copeland A."/>
            <person name="Lapidus A."/>
            <person name="Glavina del Rio T."/>
            <person name="Dalin E."/>
            <person name="Tice H."/>
            <person name="Bruce D."/>
            <person name="Goodwin L."/>
            <person name="Pitluck S."/>
            <person name="Saunders E."/>
            <person name="Brettin T."/>
            <person name="Detter J.C."/>
            <person name="Han C."/>
            <person name="Larimer F."/>
            <person name="Land M."/>
            <person name="Hauser L."/>
            <person name="Kyrpides N."/>
            <person name="Ovchinnikova G."/>
            <person name="Lovley D."/>
        </authorList>
    </citation>
    <scope>NUCLEOTIDE SEQUENCE [LARGE SCALE GENOMIC DNA]</scope>
    <source>
        <strain>M21</strain>
    </source>
</reference>
<comment type="function">
    <text evidence="1">Nucleoside triphosphate pyrophosphatase that hydrolyzes dTTP and UTP. May have a dual role in cell division arrest and in preventing the incorporation of modified nucleotides into cellular nucleic acids.</text>
</comment>
<comment type="catalytic activity">
    <reaction evidence="1">
        <text>dTTP + H2O = dTMP + diphosphate + H(+)</text>
        <dbReference type="Rhea" id="RHEA:28534"/>
        <dbReference type="ChEBI" id="CHEBI:15377"/>
        <dbReference type="ChEBI" id="CHEBI:15378"/>
        <dbReference type="ChEBI" id="CHEBI:33019"/>
        <dbReference type="ChEBI" id="CHEBI:37568"/>
        <dbReference type="ChEBI" id="CHEBI:63528"/>
        <dbReference type="EC" id="3.6.1.9"/>
    </reaction>
</comment>
<comment type="catalytic activity">
    <reaction evidence="1">
        <text>UTP + H2O = UMP + diphosphate + H(+)</text>
        <dbReference type="Rhea" id="RHEA:29395"/>
        <dbReference type="ChEBI" id="CHEBI:15377"/>
        <dbReference type="ChEBI" id="CHEBI:15378"/>
        <dbReference type="ChEBI" id="CHEBI:33019"/>
        <dbReference type="ChEBI" id="CHEBI:46398"/>
        <dbReference type="ChEBI" id="CHEBI:57865"/>
        <dbReference type="EC" id="3.6.1.9"/>
    </reaction>
</comment>
<comment type="cofactor">
    <cofactor evidence="1">
        <name>a divalent metal cation</name>
        <dbReference type="ChEBI" id="CHEBI:60240"/>
    </cofactor>
</comment>
<comment type="subcellular location">
    <subcellularLocation>
        <location evidence="1">Cytoplasm</location>
    </subcellularLocation>
</comment>
<comment type="similarity">
    <text evidence="1">Belongs to the Maf family. YhdE subfamily.</text>
</comment>
<gene>
    <name type="ordered locus">GM21_1532</name>
</gene>
<sequence length="193" mass="20831">MKNSSIVLASASPRRSELLESAGIQFRVVPADINEEPLPGEEPVDHVQRLAEGKARAAAELAEGRFFLGADTIVLCDGEIMGKPKDAVDAERMLKKLSGVPHEVVTGFAIYDRERKGAVVEAVRTKVFFKHLRDEEIRDYVATGCPFDKAGAYAIQGGAAHMVRKIEGSYTNVVGLPLCEVVDALRVIGALGN</sequence>
<dbReference type="EC" id="3.6.1.9" evidence="1"/>
<dbReference type="EMBL" id="CP001661">
    <property type="protein sequence ID" value="ACT17588.1"/>
    <property type="molecule type" value="Genomic_DNA"/>
</dbReference>
<dbReference type="SMR" id="C6E559"/>
<dbReference type="STRING" id="443144.GM21_1532"/>
<dbReference type="KEGG" id="gem:GM21_1532"/>
<dbReference type="eggNOG" id="COG0424">
    <property type="taxonomic scope" value="Bacteria"/>
</dbReference>
<dbReference type="HOGENOM" id="CLU_040416_2_1_7"/>
<dbReference type="OrthoDB" id="9807767at2"/>
<dbReference type="GO" id="GO:0005737">
    <property type="term" value="C:cytoplasm"/>
    <property type="evidence" value="ECO:0007669"/>
    <property type="project" value="UniProtKB-SubCell"/>
</dbReference>
<dbReference type="GO" id="GO:0036218">
    <property type="term" value="F:dTTP diphosphatase activity"/>
    <property type="evidence" value="ECO:0007669"/>
    <property type="project" value="RHEA"/>
</dbReference>
<dbReference type="GO" id="GO:0036221">
    <property type="term" value="F:UTP diphosphatase activity"/>
    <property type="evidence" value="ECO:0007669"/>
    <property type="project" value="RHEA"/>
</dbReference>
<dbReference type="GO" id="GO:0009117">
    <property type="term" value="P:nucleotide metabolic process"/>
    <property type="evidence" value="ECO:0007669"/>
    <property type="project" value="UniProtKB-KW"/>
</dbReference>
<dbReference type="CDD" id="cd00555">
    <property type="entry name" value="Maf"/>
    <property type="match status" value="1"/>
</dbReference>
<dbReference type="Gene3D" id="3.90.950.10">
    <property type="match status" value="1"/>
</dbReference>
<dbReference type="HAMAP" id="MF_00528">
    <property type="entry name" value="Maf"/>
    <property type="match status" value="1"/>
</dbReference>
<dbReference type="InterPro" id="IPR029001">
    <property type="entry name" value="ITPase-like_fam"/>
</dbReference>
<dbReference type="InterPro" id="IPR003697">
    <property type="entry name" value="Maf-like"/>
</dbReference>
<dbReference type="NCBIfam" id="TIGR00172">
    <property type="entry name" value="maf"/>
    <property type="match status" value="1"/>
</dbReference>
<dbReference type="NCBIfam" id="NF010948">
    <property type="entry name" value="PRK14368.1"/>
    <property type="match status" value="1"/>
</dbReference>
<dbReference type="PANTHER" id="PTHR43213">
    <property type="entry name" value="BIFUNCTIONAL DTTP/UTP PYROPHOSPHATASE/METHYLTRANSFERASE PROTEIN-RELATED"/>
    <property type="match status" value="1"/>
</dbReference>
<dbReference type="PANTHER" id="PTHR43213:SF5">
    <property type="entry name" value="BIFUNCTIONAL DTTP_UTP PYROPHOSPHATASE_METHYLTRANSFERASE PROTEIN-RELATED"/>
    <property type="match status" value="1"/>
</dbReference>
<dbReference type="Pfam" id="PF02545">
    <property type="entry name" value="Maf"/>
    <property type="match status" value="1"/>
</dbReference>
<dbReference type="PIRSF" id="PIRSF006305">
    <property type="entry name" value="Maf"/>
    <property type="match status" value="1"/>
</dbReference>
<dbReference type="SUPFAM" id="SSF52972">
    <property type="entry name" value="ITPase-like"/>
    <property type="match status" value="1"/>
</dbReference>
<protein>
    <recommendedName>
        <fullName evidence="1">dTTP/UTP pyrophosphatase</fullName>
        <shortName evidence="1">dTTPase/UTPase</shortName>
        <ecNumber evidence="1">3.6.1.9</ecNumber>
    </recommendedName>
    <alternativeName>
        <fullName evidence="1">Nucleoside triphosphate pyrophosphatase</fullName>
    </alternativeName>
    <alternativeName>
        <fullName evidence="1">Nucleotide pyrophosphatase</fullName>
        <shortName evidence="1">Nucleotide PPase</shortName>
    </alternativeName>
</protein>
<organism>
    <name type="scientific">Geobacter sp. (strain M21)</name>
    <dbReference type="NCBI Taxonomy" id="443144"/>
    <lineage>
        <taxon>Bacteria</taxon>
        <taxon>Pseudomonadati</taxon>
        <taxon>Thermodesulfobacteriota</taxon>
        <taxon>Desulfuromonadia</taxon>
        <taxon>Geobacterales</taxon>
        <taxon>Geobacteraceae</taxon>
        <taxon>Geobacter</taxon>
    </lineage>
</organism>
<name>NTPPA_GEOSM</name>
<feature type="chain" id="PRO_1000211770" description="dTTP/UTP pyrophosphatase">
    <location>
        <begin position="1"/>
        <end position="193"/>
    </location>
</feature>
<feature type="active site" description="Proton acceptor" evidence="1">
    <location>
        <position position="71"/>
    </location>
</feature>
<feature type="site" description="Important for substrate specificity" evidence="1">
    <location>
        <position position="14"/>
    </location>
</feature>
<feature type="site" description="Important for substrate specificity" evidence="1">
    <location>
        <position position="72"/>
    </location>
</feature>
<feature type="site" description="Important for substrate specificity" evidence="1">
    <location>
        <position position="156"/>
    </location>
</feature>
<evidence type="ECO:0000255" key="1">
    <source>
        <dbReference type="HAMAP-Rule" id="MF_00528"/>
    </source>
</evidence>
<proteinExistence type="inferred from homology"/>